<proteinExistence type="inferred from homology"/>
<gene>
    <name evidence="1" type="primary">ureG</name>
    <name type="ordered locus">PFL_0607</name>
</gene>
<keyword id="KW-0143">Chaperone</keyword>
<keyword id="KW-0963">Cytoplasm</keyword>
<keyword id="KW-0342">GTP-binding</keyword>
<keyword id="KW-0996">Nickel insertion</keyword>
<keyword id="KW-0547">Nucleotide-binding</keyword>
<organism>
    <name type="scientific">Pseudomonas fluorescens (strain ATCC BAA-477 / NRRL B-23932 / Pf-5)</name>
    <dbReference type="NCBI Taxonomy" id="220664"/>
    <lineage>
        <taxon>Bacteria</taxon>
        <taxon>Pseudomonadati</taxon>
        <taxon>Pseudomonadota</taxon>
        <taxon>Gammaproteobacteria</taxon>
        <taxon>Pseudomonadales</taxon>
        <taxon>Pseudomonadaceae</taxon>
        <taxon>Pseudomonas</taxon>
    </lineage>
</organism>
<feature type="chain" id="PRO_0000347424" description="Urease accessory protein UreG">
    <location>
        <begin position="1"/>
        <end position="204"/>
    </location>
</feature>
<feature type="binding site" evidence="1">
    <location>
        <begin position="12"/>
        <end position="19"/>
    </location>
    <ligand>
        <name>GTP</name>
        <dbReference type="ChEBI" id="CHEBI:37565"/>
    </ligand>
</feature>
<name>UREG_PSEF5</name>
<sequence>MNAQPLRVGIGGPVGSGKTALTLALCLALRERYNLAVVTNDIYTREDADFLVRNEALAPERIIGVETGGCPHTAIREDASINLEAVDQLNRRFPGLDLILVESGGDNLSATFSPELSDLTIYVIDVSAGDKLPRKGGPGICKSDLLVINKIDLAPLVGASLEMMNSDTQRMRGGKPFVFSNQKTGQGLADIIAFIERQGLLTAA</sequence>
<dbReference type="EMBL" id="CP000076">
    <property type="protein sequence ID" value="AAY96014.1"/>
    <property type="molecule type" value="Genomic_DNA"/>
</dbReference>
<dbReference type="RefSeq" id="WP_011058975.1">
    <property type="nucleotide sequence ID" value="NC_004129.6"/>
</dbReference>
<dbReference type="SMR" id="Q4KJ34"/>
<dbReference type="STRING" id="220664.PFL_0607"/>
<dbReference type="GeneID" id="57473596"/>
<dbReference type="KEGG" id="pfl:PFL_0607"/>
<dbReference type="PATRIC" id="fig|220664.5.peg.623"/>
<dbReference type="eggNOG" id="COG0378">
    <property type="taxonomic scope" value="Bacteria"/>
</dbReference>
<dbReference type="HOGENOM" id="CLU_072144_1_0_6"/>
<dbReference type="Proteomes" id="UP000008540">
    <property type="component" value="Chromosome"/>
</dbReference>
<dbReference type="GO" id="GO:0005737">
    <property type="term" value="C:cytoplasm"/>
    <property type="evidence" value="ECO:0007669"/>
    <property type="project" value="UniProtKB-SubCell"/>
</dbReference>
<dbReference type="GO" id="GO:0005525">
    <property type="term" value="F:GTP binding"/>
    <property type="evidence" value="ECO:0007669"/>
    <property type="project" value="UniProtKB-KW"/>
</dbReference>
<dbReference type="GO" id="GO:0003924">
    <property type="term" value="F:GTPase activity"/>
    <property type="evidence" value="ECO:0007669"/>
    <property type="project" value="InterPro"/>
</dbReference>
<dbReference type="GO" id="GO:0016151">
    <property type="term" value="F:nickel cation binding"/>
    <property type="evidence" value="ECO:0007669"/>
    <property type="project" value="UniProtKB-UniRule"/>
</dbReference>
<dbReference type="GO" id="GO:0043419">
    <property type="term" value="P:urea catabolic process"/>
    <property type="evidence" value="ECO:0007669"/>
    <property type="project" value="InterPro"/>
</dbReference>
<dbReference type="CDD" id="cd05540">
    <property type="entry name" value="UreG"/>
    <property type="match status" value="1"/>
</dbReference>
<dbReference type="FunFam" id="3.40.50.300:FF:000208">
    <property type="entry name" value="Urease accessory protein UreG"/>
    <property type="match status" value="1"/>
</dbReference>
<dbReference type="Gene3D" id="3.40.50.300">
    <property type="entry name" value="P-loop containing nucleotide triphosphate hydrolases"/>
    <property type="match status" value="1"/>
</dbReference>
<dbReference type="HAMAP" id="MF_01389">
    <property type="entry name" value="UreG"/>
    <property type="match status" value="1"/>
</dbReference>
<dbReference type="InterPro" id="IPR003495">
    <property type="entry name" value="CobW/HypB/UreG_nucleotide-bd"/>
</dbReference>
<dbReference type="InterPro" id="IPR027417">
    <property type="entry name" value="P-loop_NTPase"/>
</dbReference>
<dbReference type="InterPro" id="IPR004400">
    <property type="entry name" value="UreG"/>
</dbReference>
<dbReference type="NCBIfam" id="TIGR00101">
    <property type="entry name" value="ureG"/>
    <property type="match status" value="1"/>
</dbReference>
<dbReference type="PANTHER" id="PTHR31715">
    <property type="entry name" value="UREASE ACCESSORY PROTEIN G"/>
    <property type="match status" value="1"/>
</dbReference>
<dbReference type="PANTHER" id="PTHR31715:SF0">
    <property type="entry name" value="UREASE ACCESSORY PROTEIN G"/>
    <property type="match status" value="1"/>
</dbReference>
<dbReference type="Pfam" id="PF02492">
    <property type="entry name" value="cobW"/>
    <property type="match status" value="1"/>
</dbReference>
<dbReference type="PIRSF" id="PIRSF005624">
    <property type="entry name" value="Ni-bind_GTPase"/>
    <property type="match status" value="1"/>
</dbReference>
<dbReference type="SUPFAM" id="SSF52540">
    <property type="entry name" value="P-loop containing nucleoside triphosphate hydrolases"/>
    <property type="match status" value="1"/>
</dbReference>
<comment type="function">
    <text evidence="1">Facilitates the functional incorporation of the urease nickel metallocenter. This process requires GTP hydrolysis, probably effectuated by UreG.</text>
</comment>
<comment type="subunit">
    <text evidence="1">Homodimer. UreD, UreF and UreG form a complex that acts as a GTP-hydrolysis-dependent molecular chaperone, activating the urease apoprotein by helping to assemble the nickel containing metallocenter of UreC. The UreE protein probably delivers the nickel.</text>
</comment>
<comment type="subcellular location">
    <subcellularLocation>
        <location evidence="1">Cytoplasm</location>
    </subcellularLocation>
</comment>
<comment type="similarity">
    <text evidence="1">Belongs to the SIMIBI class G3E GTPase family. UreG subfamily.</text>
</comment>
<accession>Q4KJ34</accession>
<protein>
    <recommendedName>
        <fullName evidence="1">Urease accessory protein UreG</fullName>
    </recommendedName>
</protein>
<evidence type="ECO:0000255" key="1">
    <source>
        <dbReference type="HAMAP-Rule" id="MF_01389"/>
    </source>
</evidence>
<reference key="1">
    <citation type="journal article" date="2005" name="Nat. Biotechnol.">
        <title>Complete genome sequence of the plant commensal Pseudomonas fluorescens Pf-5.</title>
        <authorList>
            <person name="Paulsen I.T."/>
            <person name="Press C.M."/>
            <person name="Ravel J."/>
            <person name="Kobayashi D.Y."/>
            <person name="Myers G.S.A."/>
            <person name="Mavrodi D.V."/>
            <person name="DeBoy R.T."/>
            <person name="Seshadri R."/>
            <person name="Ren Q."/>
            <person name="Madupu R."/>
            <person name="Dodson R.J."/>
            <person name="Durkin A.S."/>
            <person name="Brinkac L.M."/>
            <person name="Daugherty S.C."/>
            <person name="Sullivan S.A."/>
            <person name="Rosovitz M.J."/>
            <person name="Gwinn M.L."/>
            <person name="Zhou L."/>
            <person name="Schneider D.J."/>
            <person name="Cartinhour S.W."/>
            <person name="Nelson W.C."/>
            <person name="Weidman J."/>
            <person name="Watkins K."/>
            <person name="Tran K."/>
            <person name="Khouri H."/>
            <person name="Pierson E.A."/>
            <person name="Pierson L.S. III"/>
            <person name="Thomashow L.S."/>
            <person name="Loper J.E."/>
        </authorList>
    </citation>
    <scope>NUCLEOTIDE SEQUENCE [LARGE SCALE GENOMIC DNA]</scope>
    <source>
        <strain>ATCC BAA-477 / NRRL B-23932 / Pf-5</strain>
    </source>
</reference>